<name>ISPG_MYCTU</name>
<reference key="1">
    <citation type="journal article" date="1998" name="Nature">
        <title>Deciphering the biology of Mycobacterium tuberculosis from the complete genome sequence.</title>
        <authorList>
            <person name="Cole S.T."/>
            <person name="Brosch R."/>
            <person name="Parkhill J."/>
            <person name="Garnier T."/>
            <person name="Churcher C.M."/>
            <person name="Harris D.E."/>
            <person name="Gordon S.V."/>
            <person name="Eiglmeier K."/>
            <person name="Gas S."/>
            <person name="Barry C.E. III"/>
            <person name="Tekaia F."/>
            <person name="Badcock K."/>
            <person name="Basham D."/>
            <person name="Brown D."/>
            <person name="Chillingworth T."/>
            <person name="Connor R."/>
            <person name="Davies R.M."/>
            <person name="Devlin K."/>
            <person name="Feltwell T."/>
            <person name="Gentles S."/>
            <person name="Hamlin N."/>
            <person name="Holroyd S."/>
            <person name="Hornsby T."/>
            <person name="Jagels K."/>
            <person name="Krogh A."/>
            <person name="McLean J."/>
            <person name="Moule S."/>
            <person name="Murphy L.D."/>
            <person name="Oliver S."/>
            <person name="Osborne J."/>
            <person name="Quail M.A."/>
            <person name="Rajandream M.A."/>
            <person name="Rogers J."/>
            <person name="Rutter S."/>
            <person name="Seeger K."/>
            <person name="Skelton S."/>
            <person name="Squares S."/>
            <person name="Squares R."/>
            <person name="Sulston J.E."/>
            <person name="Taylor K."/>
            <person name="Whitehead S."/>
            <person name="Barrell B.G."/>
        </authorList>
    </citation>
    <scope>NUCLEOTIDE SEQUENCE [LARGE SCALE GENOMIC DNA]</scope>
    <source>
        <strain>ATCC 25618 / H37Rv</strain>
    </source>
</reference>
<reference key="2">
    <citation type="journal article" date="2011" name="Mol. Cell. Proteomics">
        <title>Proteogenomic analysis of Mycobacterium tuberculosis by high resolution mass spectrometry.</title>
        <authorList>
            <person name="Kelkar D.S."/>
            <person name="Kumar D."/>
            <person name="Kumar P."/>
            <person name="Balakrishnan L."/>
            <person name="Muthusamy B."/>
            <person name="Yadav A.K."/>
            <person name="Shrivastava P."/>
            <person name="Marimuthu A."/>
            <person name="Anand S."/>
            <person name="Sundaram H."/>
            <person name="Kingsbury R."/>
            <person name="Harsha H.C."/>
            <person name="Nair B."/>
            <person name="Prasad T.S."/>
            <person name="Chauhan D.S."/>
            <person name="Katoch K."/>
            <person name="Katoch V.M."/>
            <person name="Kumar P."/>
            <person name="Chaerkady R."/>
            <person name="Ramachandran S."/>
            <person name="Dash D."/>
            <person name="Pandey A."/>
        </authorList>
    </citation>
    <scope>ACETYLATION [LARGE SCALE ANALYSIS] AT THR-2</scope>
    <scope>CLEAVAGE OF INITIATOR METHIONINE [LARGE SCALE ANALYSIS]</scope>
    <scope>IDENTIFICATION BY MASS SPECTROMETRY [LARGE SCALE ANALYSIS]</scope>
    <source>
        <strain>ATCC 25618 / H37Rv</strain>
    </source>
</reference>
<organism>
    <name type="scientific">Mycobacterium tuberculosis (strain ATCC 25618 / H37Rv)</name>
    <dbReference type="NCBI Taxonomy" id="83332"/>
    <lineage>
        <taxon>Bacteria</taxon>
        <taxon>Bacillati</taxon>
        <taxon>Actinomycetota</taxon>
        <taxon>Actinomycetes</taxon>
        <taxon>Mycobacteriales</taxon>
        <taxon>Mycobacteriaceae</taxon>
        <taxon>Mycobacterium</taxon>
        <taxon>Mycobacterium tuberculosis complex</taxon>
    </lineage>
</organism>
<dbReference type="EC" id="1.17.7.3" evidence="1"/>
<dbReference type="EMBL" id="AL123456">
    <property type="protein sequence ID" value="CCP45670.1"/>
    <property type="molecule type" value="Genomic_DNA"/>
</dbReference>
<dbReference type="PIR" id="F70886">
    <property type="entry name" value="F70886"/>
</dbReference>
<dbReference type="RefSeq" id="NP_217384.1">
    <property type="nucleotide sequence ID" value="NC_000962.3"/>
</dbReference>
<dbReference type="RefSeq" id="WP_003899517.1">
    <property type="nucleotide sequence ID" value="NZ_NVQJ01000006.1"/>
</dbReference>
<dbReference type="SMR" id="P9WKG3"/>
<dbReference type="FunCoup" id="P9WKG3">
    <property type="interactions" value="53"/>
</dbReference>
<dbReference type="STRING" id="83332.Rv2868c"/>
<dbReference type="iPTMnet" id="P9WKG3"/>
<dbReference type="PaxDb" id="83332-Rv2868c"/>
<dbReference type="DNASU" id="887463"/>
<dbReference type="GeneID" id="887463"/>
<dbReference type="KEGG" id="mtu:Rv2868c"/>
<dbReference type="KEGG" id="mtv:RVBD_2868c"/>
<dbReference type="TubercuList" id="Rv2868c"/>
<dbReference type="eggNOG" id="COG0821">
    <property type="taxonomic scope" value="Bacteria"/>
</dbReference>
<dbReference type="InParanoid" id="P9WKG3"/>
<dbReference type="OrthoDB" id="9803214at2"/>
<dbReference type="PhylomeDB" id="P9WKG3"/>
<dbReference type="UniPathway" id="UPA00056">
    <property type="reaction ID" value="UER00096"/>
</dbReference>
<dbReference type="Proteomes" id="UP000001584">
    <property type="component" value="Chromosome"/>
</dbReference>
<dbReference type="GO" id="GO:0009274">
    <property type="term" value="C:peptidoglycan-based cell wall"/>
    <property type="evidence" value="ECO:0007005"/>
    <property type="project" value="MTBBASE"/>
</dbReference>
<dbReference type="GO" id="GO:0005886">
    <property type="term" value="C:plasma membrane"/>
    <property type="evidence" value="ECO:0007005"/>
    <property type="project" value="MTBBASE"/>
</dbReference>
<dbReference type="GO" id="GO:0051539">
    <property type="term" value="F:4 iron, 4 sulfur cluster binding"/>
    <property type="evidence" value="ECO:0007669"/>
    <property type="project" value="UniProtKB-UniRule"/>
</dbReference>
<dbReference type="GO" id="GO:0046429">
    <property type="term" value="F:4-hydroxy-3-methylbut-2-en-1-yl diphosphate synthase activity (ferredoxin)"/>
    <property type="evidence" value="ECO:0000318"/>
    <property type="project" value="GO_Central"/>
</dbReference>
<dbReference type="GO" id="GO:0141197">
    <property type="term" value="F:4-hydroxy-3-methylbut-2-enyl-diphosphate synthase activity (flavodoxin)"/>
    <property type="evidence" value="ECO:0007669"/>
    <property type="project" value="UniProtKB-EC"/>
</dbReference>
<dbReference type="GO" id="GO:0005506">
    <property type="term" value="F:iron ion binding"/>
    <property type="evidence" value="ECO:0007669"/>
    <property type="project" value="InterPro"/>
</dbReference>
<dbReference type="GO" id="GO:0019288">
    <property type="term" value="P:isopentenyl diphosphate biosynthetic process, methylerythritol 4-phosphate pathway"/>
    <property type="evidence" value="ECO:0000318"/>
    <property type="project" value="GO_Central"/>
</dbReference>
<dbReference type="GO" id="GO:0016114">
    <property type="term" value="P:terpenoid biosynthetic process"/>
    <property type="evidence" value="ECO:0007669"/>
    <property type="project" value="InterPro"/>
</dbReference>
<dbReference type="FunFam" id="3.20.20.20:FF:000003">
    <property type="entry name" value="4-hydroxy-3-methylbut-2-en-1-yl diphosphate synthase (flavodoxin)"/>
    <property type="match status" value="1"/>
</dbReference>
<dbReference type="FunFam" id="3.30.413.10:FF:000001">
    <property type="entry name" value="4-hydroxy-3-methylbut-2-en-1-yl diphosphate synthase (flavodoxin)"/>
    <property type="match status" value="1"/>
</dbReference>
<dbReference type="Gene3D" id="3.20.20.20">
    <property type="entry name" value="Dihydropteroate synthase-like"/>
    <property type="match status" value="1"/>
</dbReference>
<dbReference type="Gene3D" id="3.30.413.10">
    <property type="entry name" value="Sulfite Reductase Hemoprotein, domain 1"/>
    <property type="match status" value="1"/>
</dbReference>
<dbReference type="HAMAP" id="MF_00159">
    <property type="entry name" value="IspG"/>
    <property type="match status" value="1"/>
</dbReference>
<dbReference type="InterPro" id="IPR011005">
    <property type="entry name" value="Dihydropteroate_synth-like_sf"/>
</dbReference>
<dbReference type="InterPro" id="IPR016425">
    <property type="entry name" value="IspG_bac"/>
</dbReference>
<dbReference type="InterPro" id="IPR004588">
    <property type="entry name" value="IspG_bac-typ"/>
</dbReference>
<dbReference type="InterPro" id="IPR045854">
    <property type="entry name" value="NO2/SO3_Rdtase_4Fe4S_sf"/>
</dbReference>
<dbReference type="NCBIfam" id="TIGR00612">
    <property type="entry name" value="ispG_gcpE"/>
    <property type="match status" value="1"/>
</dbReference>
<dbReference type="NCBIfam" id="NF001540">
    <property type="entry name" value="PRK00366.1"/>
    <property type="match status" value="1"/>
</dbReference>
<dbReference type="PANTHER" id="PTHR30454">
    <property type="entry name" value="4-HYDROXY-3-METHYLBUT-2-EN-1-YL DIPHOSPHATE SYNTHASE"/>
    <property type="match status" value="1"/>
</dbReference>
<dbReference type="PANTHER" id="PTHR30454:SF0">
    <property type="entry name" value="4-HYDROXY-3-METHYLBUT-2-EN-1-YL DIPHOSPHATE SYNTHASE (FERREDOXIN), CHLOROPLASTIC"/>
    <property type="match status" value="1"/>
</dbReference>
<dbReference type="Pfam" id="PF04551">
    <property type="entry name" value="GcpE"/>
    <property type="match status" value="1"/>
</dbReference>
<dbReference type="PIRSF" id="PIRSF004640">
    <property type="entry name" value="IspG"/>
    <property type="match status" value="1"/>
</dbReference>
<dbReference type="SUPFAM" id="SSF51717">
    <property type="entry name" value="Dihydropteroate synthetase-like"/>
    <property type="match status" value="1"/>
</dbReference>
<dbReference type="SUPFAM" id="SSF56014">
    <property type="entry name" value="Nitrite and sulphite reductase 4Fe-4S domain-like"/>
    <property type="match status" value="1"/>
</dbReference>
<sequence length="387" mass="40482">MTVGLGMPQPPAPTLAPRRATRQLMVGNVGVGSDHPVSVQSMCTTKTHDVNSTLQQIAELTAAGCDIVRVACPRQEDADALAEIARHSQIPVVADIHFQPRYIFAAIDAGCAAVRVNPGNIKEFDGRVGEVAKAAGAAGIPIRIGVNAGSLDKRFMEKYGKATPEALVESALWEASLFEEHGFGDIKISVKHNDPVVMVAAYELLAARCDYPLHLGVTEAGPAFQGTIKSAVAFGALLSRGIGDTIRVSLSAPPVEEVKVGNQVLESLNLRPRSLEIVSCPSCGRAQVDVYTLANEVTAGLDGLDVPLRVAVMGCVVNGPGEAREADLGVASGNGKGQIFVRGEVIKTVPEAQIVETLIEEAMRLAAEMGEQDPGATPSGSPIVTVS</sequence>
<proteinExistence type="evidence at protein level"/>
<evidence type="ECO:0000255" key="1">
    <source>
        <dbReference type="HAMAP-Rule" id="MF_00159"/>
    </source>
</evidence>
<evidence type="ECO:0007744" key="2">
    <source>
    </source>
</evidence>
<feature type="initiator methionine" description="Removed" evidence="2">
    <location>
        <position position="1"/>
    </location>
</feature>
<feature type="chain" id="PRO_0000190602" description="4-hydroxy-3-methylbut-2-en-1-yl diphosphate synthase (flavodoxin)">
    <location>
        <begin position="2"/>
        <end position="387"/>
    </location>
</feature>
<feature type="binding site" evidence="1">
    <location>
        <position position="280"/>
    </location>
    <ligand>
        <name>[4Fe-4S] cluster</name>
        <dbReference type="ChEBI" id="CHEBI:49883"/>
    </ligand>
</feature>
<feature type="binding site" evidence="1">
    <location>
        <position position="283"/>
    </location>
    <ligand>
        <name>[4Fe-4S] cluster</name>
        <dbReference type="ChEBI" id="CHEBI:49883"/>
    </ligand>
</feature>
<feature type="binding site" evidence="1">
    <location>
        <position position="315"/>
    </location>
    <ligand>
        <name>[4Fe-4S] cluster</name>
        <dbReference type="ChEBI" id="CHEBI:49883"/>
    </ligand>
</feature>
<feature type="binding site" evidence="1">
    <location>
        <position position="322"/>
    </location>
    <ligand>
        <name>[4Fe-4S] cluster</name>
        <dbReference type="ChEBI" id="CHEBI:49883"/>
    </ligand>
</feature>
<feature type="modified residue" description="N-acetylthreonine" evidence="2">
    <location>
        <position position="2"/>
    </location>
</feature>
<keyword id="KW-0004">4Fe-4S</keyword>
<keyword id="KW-0007">Acetylation</keyword>
<keyword id="KW-0408">Iron</keyword>
<keyword id="KW-0411">Iron-sulfur</keyword>
<keyword id="KW-0414">Isoprene biosynthesis</keyword>
<keyword id="KW-0479">Metal-binding</keyword>
<keyword id="KW-0560">Oxidoreductase</keyword>
<keyword id="KW-1185">Reference proteome</keyword>
<accession>P9WKG3</accession>
<accession>L0TAW0</accession>
<accession>O33350</accession>
<protein>
    <recommendedName>
        <fullName evidence="1">4-hydroxy-3-methylbut-2-en-1-yl diphosphate synthase (flavodoxin)</fullName>
        <ecNumber evidence="1">1.17.7.3</ecNumber>
    </recommendedName>
    <alternativeName>
        <fullName evidence="1">1-hydroxy-2-methyl-2-(E)-butenyl 4-diphosphate synthase</fullName>
    </alternativeName>
</protein>
<gene>
    <name evidence="1" type="primary">ispG</name>
    <name type="synonym">gcpE</name>
    <name type="ordered locus">Rv2868c</name>
    <name type="ORF">MTV003.14c</name>
</gene>
<comment type="function">
    <text evidence="1">Converts 2C-methyl-D-erythritol 2,4-cyclodiphosphate (ME-2,4cPP) into 1-hydroxy-2-methyl-2-(E)-butenyl 4-diphosphate.</text>
</comment>
<comment type="catalytic activity">
    <reaction evidence="1">
        <text>(2E)-4-hydroxy-3-methylbut-2-enyl diphosphate + oxidized [flavodoxin] + H2O + 2 H(+) = 2-C-methyl-D-erythritol 2,4-cyclic diphosphate + reduced [flavodoxin]</text>
        <dbReference type="Rhea" id="RHEA:43604"/>
        <dbReference type="Rhea" id="RHEA-COMP:10622"/>
        <dbReference type="Rhea" id="RHEA-COMP:10623"/>
        <dbReference type="ChEBI" id="CHEBI:15377"/>
        <dbReference type="ChEBI" id="CHEBI:15378"/>
        <dbReference type="ChEBI" id="CHEBI:57618"/>
        <dbReference type="ChEBI" id="CHEBI:58210"/>
        <dbReference type="ChEBI" id="CHEBI:58483"/>
        <dbReference type="ChEBI" id="CHEBI:128753"/>
        <dbReference type="EC" id="1.17.7.3"/>
    </reaction>
</comment>
<comment type="cofactor">
    <cofactor evidence="1">
        <name>[4Fe-4S] cluster</name>
        <dbReference type="ChEBI" id="CHEBI:49883"/>
    </cofactor>
    <text evidence="1">Binds 1 [4Fe-4S] cluster.</text>
</comment>
<comment type="pathway">
    <text evidence="1">Isoprenoid biosynthesis; isopentenyl diphosphate biosynthesis via DXP pathway; isopentenyl diphosphate from 1-deoxy-D-xylulose 5-phosphate: step 5/6.</text>
</comment>
<comment type="similarity">
    <text evidence="1">Belongs to the IspG family.</text>
</comment>